<protein>
    <recommendedName>
        <fullName>Chloramphenicol acetyltransferase</fullName>
        <shortName>CAT</shortName>
        <ecNumber>2.3.1.28</ecNumber>
    </recommendedName>
</protein>
<reference key="1">
    <citation type="journal article" date="1989" name="Gene">
        <title>Nucleotide sequence analysis and expression studies of a chloramphenicol-acetyltransferase-coding gene from Clostridium perfringens.</title>
        <authorList>
            <person name="Steffen C."/>
            <person name="Matzura H."/>
        </authorList>
    </citation>
    <scope>NUCLEOTIDE SEQUENCE [GENOMIC DNA]</scope>
    <source>
        <transposon>Tn4451</transposon>
    </source>
</reference>
<reference key="2">
    <citation type="journal article" date="1992" name="Plasmid">
        <title>Construction of a sequenced Clostridium perfringens-Escherichia coli shuttle plasmid.</title>
        <authorList>
            <person name="Sloan J."/>
            <person name="Warner T.A."/>
            <person name="Scott P.T."/>
            <person name="Bannam T.L."/>
            <person name="Berryman D.I."/>
            <person name="Rood J.I."/>
        </authorList>
    </citation>
    <scope>NUCLEOTIDE SEQUENCE [GENOMIC DNA]</scope>
</reference>
<reference key="3">
    <citation type="journal article" date="1995" name="Mol. Microbiol.">
        <title>Molecular genetics of the chloramphenicol-resistance transposon Tn4451 from Clostridium perfringens: the TnpX site-specific recombinase excises a circular transposon molecule.</title>
        <authorList>
            <person name="Bannam T.L."/>
            <person name="Crellin P.K."/>
            <person name="Rood J.I."/>
        </authorList>
    </citation>
    <scope>NUCLEOTIDE SEQUENCE [GENOMIC DNA]</scope>
    <source>
        <strain>CP590</strain>
    </source>
</reference>
<organism>
    <name type="scientific">Clostridium perfringens</name>
    <dbReference type="NCBI Taxonomy" id="1502"/>
    <lineage>
        <taxon>Bacteria</taxon>
        <taxon>Bacillati</taxon>
        <taxon>Bacillota</taxon>
        <taxon>Clostridia</taxon>
        <taxon>Eubacteriales</taxon>
        <taxon>Clostridiaceae</taxon>
        <taxon>Clostridium</taxon>
    </lineage>
</organism>
<feature type="chain" id="PRO_0000165862" description="Chloramphenicol acetyltransferase">
    <location>
        <begin position="1"/>
        <end position="207"/>
    </location>
</feature>
<feature type="active site" description="Proton acceptor" evidence="1">
    <location>
        <position position="186"/>
    </location>
</feature>
<geneLocation type="plasmid">
    <name>pIP401</name>
</geneLocation>
<comment type="function">
    <text>This enzyme is an effector of chloramphenicol resistance in bacteria.</text>
</comment>
<comment type="catalytic activity">
    <reaction evidence="1">
        <text>chloramphenicol + acetyl-CoA = chloramphenicol 3-acetate + CoA</text>
        <dbReference type="Rhea" id="RHEA:18421"/>
        <dbReference type="ChEBI" id="CHEBI:16730"/>
        <dbReference type="ChEBI" id="CHEBI:17698"/>
        <dbReference type="ChEBI" id="CHEBI:57287"/>
        <dbReference type="ChEBI" id="CHEBI:57288"/>
        <dbReference type="EC" id="2.3.1.28"/>
    </reaction>
</comment>
<comment type="subunit">
    <text>Homotrimer.</text>
</comment>
<comment type="similarity">
    <text evidence="2">Belongs to the chloramphenicol acetyltransferase family.</text>
</comment>
<evidence type="ECO:0000255" key="1">
    <source>
        <dbReference type="PROSITE-ProRule" id="PRU10021"/>
    </source>
</evidence>
<evidence type="ECO:0000305" key="2"/>
<accession>P26826</accession>
<sequence>MVFEKIDKNSWNRKEYFDHYFASVPCTYSMTVKVDITQIKEKGMKLYPAMLYYIAMIVNRHSEFRTAINQDGELGIYDEMIPSYTIFHNDTETFSSLWTECKSDFKSFLADYESDTQRYGNNHRMEGKPNAPENIFNVSMIPWSTFDGFNLNLQKGYDYLIPIFTMGKYYKEDNKIILPLAIQVHHAVCDGFHICRFVNELQELINS</sequence>
<keyword id="KW-0012">Acyltransferase</keyword>
<keyword id="KW-0046">Antibiotic resistance</keyword>
<keyword id="KW-0614">Plasmid</keyword>
<keyword id="KW-0808">Transferase</keyword>
<keyword id="KW-0814">Transposable element</keyword>
<name>CAT2_CLOPF</name>
<dbReference type="EC" id="2.3.1.28"/>
<dbReference type="EMBL" id="M74769">
    <property type="protein sequence ID" value="AAA23213.1"/>
    <property type="molecule type" value="Genomic_DNA"/>
</dbReference>
<dbReference type="EMBL" id="M77169">
    <property type="protein sequence ID" value="AAA73115.1"/>
    <property type="molecule type" value="Genomic_DNA"/>
</dbReference>
<dbReference type="EMBL" id="L02937">
    <property type="protein sequence ID" value="AAC36952.1"/>
    <property type="molecule type" value="Genomic_DNA"/>
</dbReference>
<dbReference type="EMBL" id="U15027">
    <property type="protein sequence ID" value="AAB51421.1"/>
    <property type="molecule type" value="Genomic_DNA"/>
</dbReference>
<dbReference type="PIR" id="S78535">
    <property type="entry name" value="I40797"/>
</dbReference>
<dbReference type="RefSeq" id="YP_009063396.1">
    <property type="nucleotide sequence ID" value="NC_025042.1"/>
</dbReference>
<dbReference type="SMR" id="P26826"/>
<dbReference type="CARD" id="ARO:3002686">
    <property type="molecule name" value="catP"/>
    <property type="mechanism identifier" value="ARO:0001004"/>
    <property type="mechanism name" value="antibiotic inactivation"/>
</dbReference>
<dbReference type="KEGG" id="ag:AAB51421"/>
<dbReference type="GO" id="GO:0008811">
    <property type="term" value="F:chloramphenicol O-acetyltransferase activity"/>
    <property type="evidence" value="ECO:0007669"/>
    <property type="project" value="UniProtKB-EC"/>
</dbReference>
<dbReference type="GO" id="GO:0046677">
    <property type="term" value="P:response to antibiotic"/>
    <property type="evidence" value="ECO:0007669"/>
    <property type="project" value="UniProtKB-KW"/>
</dbReference>
<dbReference type="Gene3D" id="3.30.559.10">
    <property type="entry name" value="Chloramphenicol acetyltransferase-like domain"/>
    <property type="match status" value="1"/>
</dbReference>
<dbReference type="InterPro" id="IPR023213">
    <property type="entry name" value="CAT-like_dom_sf"/>
</dbReference>
<dbReference type="InterPro" id="IPR018372">
    <property type="entry name" value="Chloramphenicol_AcTrfase_AS"/>
</dbReference>
<dbReference type="InterPro" id="IPR001707">
    <property type="entry name" value="Cmp_AcTrfase"/>
</dbReference>
<dbReference type="NCBIfam" id="NF000491">
    <property type="entry name" value="chloram_CatA"/>
    <property type="match status" value="1"/>
</dbReference>
<dbReference type="PANTHER" id="PTHR38474:SF2">
    <property type="entry name" value="CHLORAMPHENICOL ACETYLTRANSFERASE"/>
    <property type="match status" value="1"/>
</dbReference>
<dbReference type="PANTHER" id="PTHR38474">
    <property type="entry name" value="SLR0299 PROTEIN"/>
    <property type="match status" value="1"/>
</dbReference>
<dbReference type="Pfam" id="PF00302">
    <property type="entry name" value="CAT"/>
    <property type="match status" value="1"/>
</dbReference>
<dbReference type="PIRSF" id="PIRSF000440">
    <property type="entry name" value="CAT"/>
    <property type="match status" value="1"/>
</dbReference>
<dbReference type="SMART" id="SM01059">
    <property type="entry name" value="CAT"/>
    <property type="match status" value="1"/>
</dbReference>
<dbReference type="SUPFAM" id="SSF52777">
    <property type="entry name" value="CoA-dependent acyltransferases"/>
    <property type="match status" value="1"/>
</dbReference>
<dbReference type="PROSITE" id="PS00100">
    <property type="entry name" value="CAT"/>
    <property type="match status" value="1"/>
</dbReference>
<proteinExistence type="inferred from homology"/>
<gene>
    <name type="primary">catP</name>
</gene>